<sequence>MNLHEYQAKQLFARYGLPAPVGYACTTPREAEEAASKIGAGPWVVKCQVHAGGRGKAGGVKVVKSKEEIRAFAENWLGKRLVTYQTDANGQPVNQILVEAATDIGKELYLGAVVDRSSRRVVFMASTEGGVEIEKVAEETPHLIHKVALDPLTGPMPYQGRELAFKLGLEGKLVQQFTKIFMGLATIFLERDLALIEINPLVITKQGDLICLDGKLGADGNALFRQPDLREMRDQSQEDPREAQAAQWELNYVALDGNIGCMVNGAGLAMGTMDIVKLHGGEPANFLDVGGGATKERVTEAFKIILSDDNVKAVLVNIFGGIVRCDLIADGIIGAVEEVGVNVPVVVRLEGNNAELGAKKLADSGLNIIAAKSLTDAAQQVVAAVEGK</sequence>
<name>SUCC_SALHS</name>
<comment type="function">
    <text evidence="1">Succinyl-CoA synthetase functions in the citric acid cycle (TCA), coupling the hydrolysis of succinyl-CoA to the synthesis of either ATP or GTP and thus represents the only step of substrate-level phosphorylation in the TCA. The beta subunit provides nucleotide specificity of the enzyme and binds the substrate succinate, while the binding sites for coenzyme A and phosphate are found in the alpha subunit.</text>
</comment>
<comment type="catalytic activity">
    <reaction evidence="1">
        <text>succinate + ATP + CoA = succinyl-CoA + ADP + phosphate</text>
        <dbReference type="Rhea" id="RHEA:17661"/>
        <dbReference type="ChEBI" id="CHEBI:30031"/>
        <dbReference type="ChEBI" id="CHEBI:30616"/>
        <dbReference type="ChEBI" id="CHEBI:43474"/>
        <dbReference type="ChEBI" id="CHEBI:57287"/>
        <dbReference type="ChEBI" id="CHEBI:57292"/>
        <dbReference type="ChEBI" id="CHEBI:456216"/>
        <dbReference type="EC" id="6.2.1.5"/>
    </reaction>
    <physiologicalReaction direction="right-to-left" evidence="1">
        <dbReference type="Rhea" id="RHEA:17663"/>
    </physiologicalReaction>
</comment>
<comment type="catalytic activity">
    <reaction evidence="1">
        <text>GTP + succinate + CoA = succinyl-CoA + GDP + phosphate</text>
        <dbReference type="Rhea" id="RHEA:22120"/>
        <dbReference type="ChEBI" id="CHEBI:30031"/>
        <dbReference type="ChEBI" id="CHEBI:37565"/>
        <dbReference type="ChEBI" id="CHEBI:43474"/>
        <dbReference type="ChEBI" id="CHEBI:57287"/>
        <dbReference type="ChEBI" id="CHEBI:57292"/>
        <dbReference type="ChEBI" id="CHEBI:58189"/>
    </reaction>
    <physiologicalReaction direction="right-to-left" evidence="1">
        <dbReference type="Rhea" id="RHEA:22122"/>
    </physiologicalReaction>
</comment>
<comment type="cofactor">
    <cofactor evidence="1">
        <name>Mg(2+)</name>
        <dbReference type="ChEBI" id="CHEBI:18420"/>
    </cofactor>
    <text evidence="1">Binds 1 Mg(2+) ion per subunit.</text>
</comment>
<comment type="pathway">
    <text evidence="1">Carbohydrate metabolism; tricarboxylic acid cycle; succinate from succinyl-CoA (ligase route): step 1/1.</text>
</comment>
<comment type="subunit">
    <text evidence="1">Heterotetramer of two alpha and two beta subunits.</text>
</comment>
<comment type="similarity">
    <text evidence="1">Belongs to the succinate/malate CoA ligase beta subunit family.</text>
</comment>
<accession>B4TBD7</accession>
<reference key="1">
    <citation type="journal article" date="2011" name="J. Bacteriol.">
        <title>Comparative genomics of 28 Salmonella enterica isolates: evidence for CRISPR-mediated adaptive sublineage evolution.</title>
        <authorList>
            <person name="Fricke W.F."/>
            <person name="Mammel M.K."/>
            <person name="McDermott P.F."/>
            <person name="Tartera C."/>
            <person name="White D.G."/>
            <person name="Leclerc J.E."/>
            <person name="Ravel J."/>
            <person name="Cebula T.A."/>
        </authorList>
    </citation>
    <scope>NUCLEOTIDE SEQUENCE [LARGE SCALE GENOMIC DNA]</scope>
    <source>
        <strain>SL476</strain>
    </source>
</reference>
<gene>
    <name evidence="1" type="primary">sucC</name>
    <name type="ordered locus">SeHA_C0861</name>
</gene>
<proteinExistence type="inferred from homology"/>
<organism>
    <name type="scientific">Salmonella heidelberg (strain SL476)</name>
    <dbReference type="NCBI Taxonomy" id="454169"/>
    <lineage>
        <taxon>Bacteria</taxon>
        <taxon>Pseudomonadati</taxon>
        <taxon>Pseudomonadota</taxon>
        <taxon>Gammaproteobacteria</taxon>
        <taxon>Enterobacterales</taxon>
        <taxon>Enterobacteriaceae</taxon>
        <taxon>Salmonella</taxon>
    </lineage>
</organism>
<feature type="chain" id="PRO_1000129224" description="Succinate--CoA ligase [ADP-forming] subunit beta">
    <location>
        <begin position="1"/>
        <end position="388"/>
    </location>
</feature>
<feature type="domain" description="ATP-grasp" evidence="1">
    <location>
        <begin position="9"/>
        <end position="244"/>
    </location>
</feature>
<feature type="binding site" evidence="1">
    <location>
        <position position="46"/>
    </location>
    <ligand>
        <name>ATP</name>
        <dbReference type="ChEBI" id="CHEBI:30616"/>
    </ligand>
</feature>
<feature type="binding site" evidence="1">
    <location>
        <begin position="53"/>
        <end position="55"/>
    </location>
    <ligand>
        <name>ATP</name>
        <dbReference type="ChEBI" id="CHEBI:30616"/>
    </ligand>
</feature>
<feature type="binding site" evidence="1">
    <location>
        <position position="99"/>
    </location>
    <ligand>
        <name>ATP</name>
        <dbReference type="ChEBI" id="CHEBI:30616"/>
    </ligand>
</feature>
<feature type="binding site" evidence="1">
    <location>
        <position position="102"/>
    </location>
    <ligand>
        <name>ATP</name>
        <dbReference type="ChEBI" id="CHEBI:30616"/>
    </ligand>
</feature>
<feature type="binding site" evidence="1">
    <location>
        <position position="107"/>
    </location>
    <ligand>
        <name>ATP</name>
        <dbReference type="ChEBI" id="CHEBI:30616"/>
    </ligand>
</feature>
<feature type="binding site" evidence="1">
    <location>
        <position position="199"/>
    </location>
    <ligand>
        <name>Mg(2+)</name>
        <dbReference type="ChEBI" id="CHEBI:18420"/>
    </ligand>
</feature>
<feature type="binding site" evidence="1">
    <location>
        <position position="213"/>
    </location>
    <ligand>
        <name>Mg(2+)</name>
        <dbReference type="ChEBI" id="CHEBI:18420"/>
    </ligand>
</feature>
<feature type="binding site" evidence="1">
    <location>
        <position position="264"/>
    </location>
    <ligand>
        <name>substrate</name>
        <note>ligand shared with subunit alpha</note>
    </ligand>
</feature>
<feature type="binding site" evidence="1">
    <location>
        <begin position="321"/>
        <end position="323"/>
    </location>
    <ligand>
        <name>substrate</name>
        <note>ligand shared with subunit alpha</note>
    </ligand>
</feature>
<evidence type="ECO:0000255" key="1">
    <source>
        <dbReference type="HAMAP-Rule" id="MF_00558"/>
    </source>
</evidence>
<dbReference type="EC" id="6.2.1.5" evidence="1"/>
<dbReference type="EMBL" id="CP001120">
    <property type="protein sequence ID" value="ACF67403.1"/>
    <property type="molecule type" value="Genomic_DNA"/>
</dbReference>
<dbReference type="RefSeq" id="WP_001048590.1">
    <property type="nucleotide sequence ID" value="NC_011083.1"/>
</dbReference>
<dbReference type="SMR" id="B4TBD7"/>
<dbReference type="KEGG" id="seh:SeHA_C0861"/>
<dbReference type="HOGENOM" id="CLU_037430_4_0_6"/>
<dbReference type="UniPathway" id="UPA00223">
    <property type="reaction ID" value="UER00999"/>
</dbReference>
<dbReference type="Proteomes" id="UP000001866">
    <property type="component" value="Chromosome"/>
</dbReference>
<dbReference type="GO" id="GO:0005829">
    <property type="term" value="C:cytosol"/>
    <property type="evidence" value="ECO:0007669"/>
    <property type="project" value="TreeGrafter"/>
</dbReference>
<dbReference type="GO" id="GO:0042709">
    <property type="term" value="C:succinate-CoA ligase complex"/>
    <property type="evidence" value="ECO:0007669"/>
    <property type="project" value="TreeGrafter"/>
</dbReference>
<dbReference type="GO" id="GO:0005524">
    <property type="term" value="F:ATP binding"/>
    <property type="evidence" value="ECO:0007669"/>
    <property type="project" value="UniProtKB-UniRule"/>
</dbReference>
<dbReference type="GO" id="GO:0000287">
    <property type="term" value="F:magnesium ion binding"/>
    <property type="evidence" value="ECO:0007669"/>
    <property type="project" value="UniProtKB-UniRule"/>
</dbReference>
<dbReference type="GO" id="GO:0004775">
    <property type="term" value="F:succinate-CoA ligase (ADP-forming) activity"/>
    <property type="evidence" value="ECO:0007669"/>
    <property type="project" value="UniProtKB-UniRule"/>
</dbReference>
<dbReference type="GO" id="GO:0004776">
    <property type="term" value="F:succinate-CoA ligase (GDP-forming) activity"/>
    <property type="evidence" value="ECO:0007669"/>
    <property type="project" value="RHEA"/>
</dbReference>
<dbReference type="GO" id="GO:0006104">
    <property type="term" value="P:succinyl-CoA metabolic process"/>
    <property type="evidence" value="ECO:0007669"/>
    <property type="project" value="TreeGrafter"/>
</dbReference>
<dbReference type="GO" id="GO:0006099">
    <property type="term" value="P:tricarboxylic acid cycle"/>
    <property type="evidence" value="ECO:0007669"/>
    <property type="project" value="UniProtKB-UniRule"/>
</dbReference>
<dbReference type="FunFam" id="3.30.1490.20:FF:000002">
    <property type="entry name" value="Succinate--CoA ligase [ADP-forming] subunit beta"/>
    <property type="match status" value="1"/>
</dbReference>
<dbReference type="FunFam" id="3.30.470.20:FF:000002">
    <property type="entry name" value="Succinate--CoA ligase [ADP-forming] subunit beta"/>
    <property type="match status" value="1"/>
</dbReference>
<dbReference type="FunFam" id="3.40.50.261:FF:000001">
    <property type="entry name" value="Succinate--CoA ligase [ADP-forming] subunit beta"/>
    <property type="match status" value="1"/>
</dbReference>
<dbReference type="Gene3D" id="3.30.1490.20">
    <property type="entry name" value="ATP-grasp fold, A domain"/>
    <property type="match status" value="1"/>
</dbReference>
<dbReference type="Gene3D" id="3.30.470.20">
    <property type="entry name" value="ATP-grasp fold, B domain"/>
    <property type="match status" value="1"/>
</dbReference>
<dbReference type="Gene3D" id="3.40.50.261">
    <property type="entry name" value="Succinyl-CoA synthetase domains"/>
    <property type="match status" value="1"/>
</dbReference>
<dbReference type="HAMAP" id="MF_00558">
    <property type="entry name" value="Succ_CoA_beta"/>
    <property type="match status" value="1"/>
</dbReference>
<dbReference type="InterPro" id="IPR011761">
    <property type="entry name" value="ATP-grasp"/>
</dbReference>
<dbReference type="InterPro" id="IPR013650">
    <property type="entry name" value="ATP-grasp_succ-CoA_synth-type"/>
</dbReference>
<dbReference type="InterPro" id="IPR013815">
    <property type="entry name" value="ATP_grasp_subdomain_1"/>
</dbReference>
<dbReference type="InterPro" id="IPR017866">
    <property type="entry name" value="Succ-CoA_synthase_bsu_CS"/>
</dbReference>
<dbReference type="InterPro" id="IPR005811">
    <property type="entry name" value="SUCC_ACL_C"/>
</dbReference>
<dbReference type="InterPro" id="IPR005809">
    <property type="entry name" value="Succ_CoA_ligase-like_bsu"/>
</dbReference>
<dbReference type="InterPro" id="IPR016102">
    <property type="entry name" value="Succinyl-CoA_synth-like"/>
</dbReference>
<dbReference type="NCBIfam" id="NF001913">
    <property type="entry name" value="PRK00696.1"/>
    <property type="match status" value="1"/>
</dbReference>
<dbReference type="NCBIfam" id="TIGR01016">
    <property type="entry name" value="sucCoAbeta"/>
    <property type="match status" value="1"/>
</dbReference>
<dbReference type="PANTHER" id="PTHR11815:SF10">
    <property type="entry name" value="SUCCINATE--COA LIGASE [GDP-FORMING] SUBUNIT BETA, MITOCHONDRIAL"/>
    <property type="match status" value="1"/>
</dbReference>
<dbReference type="PANTHER" id="PTHR11815">
    <property type="entry name" value="SUCCINYL-COA SYNTHETASE BETA CHAIN"/>
    <property type="match status" value="1"/>
</dbReference>
<dbReference type="Pfam" id="PF08442">
    <property type="entry name" value="ATP-grasp_2"/>
    <property type="match status" value="1"/>
</dbReference>
<dbReference type="Pfam" id="PF00549">
    <property type="entry name" value="Ligase_CoA"/>
    <property type="match status" value="1"/>
</dbReference>
<dbReference type="PIRSF" id="PIRSF001554">
    <property type="entry name" value="SucCS_beta"/>
    <property type="match status" value="1"/>
</dbReference>
<dbReference type="SUPFAM" id="SSF56059">
    <property type="entry name" value="Glutathione synthetase ATP-binding domain-like"/>
    <property type="match status" value="1"/>
</dbReference>
<dbReference type="SUPFAM" id="SSF52210">
    <property type="entry name" value="Succinyl-CoA synthetase domains"/>
    <property type="match status" value="1"/>
</dbReference>
<dbReference type="PROSITE" id="PS50975">
    <property type="entry name" value="ATP_GRASP"/>
    <property type="match status" value="1"/>
</dbReference>
<dbReference type="PROSITE" id="PS01217">
    <property type="entry name" value="SUCCINYL_COA_LIG_3"/>
    <property type="match status" value="1"/>
</dbReference>
<keyword id="KW-0067">ATP-binding</keyword>
<keyword id="KW-0436">Ligase</keyword>
<keyword id="KW-0460">Magnesium</keyword>
<keyword id="KW-0479">Metal-binding</keyword>
<keyword id="KW-0547">Nucleotide-binding</keyword>
<keyword id="KW-0816">Tricarboxylic acid cycle</keyword>
<protein>
    <recommendedName>
        <fullName evidence="1">Succinate--CoA ligase [ADP-forming] subunit beta</fullName>
        <ecNumber evidence="1">6.2.1.5</ecNumber>
    </recommendedName>
    <alternativeName>
        <fullName evidence="1">Succinyl-CoA synthetase subunit beta</fullName>
        <shortName evidence="1">SCS-beta</shortName>
    </alternativeName>
</protein>